<evidence type="ECO:0000255" key="1">
    <source>
        <dbReference type="HAMAP-Rule" id="MF_00050"/>
    </source>
</evidence>
<reference key="1">
    <citation type="submission" date="2006-08" db="EMBL/GenBank/DDBJ databases">
        <title>Complete sequence of chromosome 1 of Burkholderia cenocepacia HI2424.</title>
        <authorList>
            <person name="Copeland A."/>
            <person name="Lucas S."/>
            <person name="Lapidus A."/>
            <person name="Barry K."/>
            <person name="Detter J.C."/>
            <person name="Glavina del Rio T."/>
            <person name="Hammon N."/>
            <person name="Israni S."/>
            <person name="Pitluck S."/>
            <person name="Chain P."/>
            <person name="Malfatti S."/>
            <person name="Shin M."/>
            <person name="Vergez L."/>
            <person name="Schmutz J."/>
            <person name="Larimer F."/>
            <person name="Land M."/>
            <person name="Hauser L."/>
            <person name="Kyrpides N."/>
            <person name="Kim E."/>
            <person name="LiPuma J.J."/>
            <person name="Gonzalez C.F."/>
            <person name="Konstantinidis K."/>
            <person name="Tiedje J.M."/>
            <person name="Richardson P."/>
        </authorList>
    </citation>
    <scope>NUCLEOTIDE SEQUENCE [LARGE SCALE GENOMIC DNA]</scope>
    <source>
        <strain>HI2424</strain>
    </source>
</reference>
<feature type="chain" id="PRO_1000006062" description="Elongation factor Ts">
    <location>
        <begin position="1"/>
        <end position="293"/>
    </location>
</feature>
<feature type="region of interest" description="Involved in Mg(2+) ion dislocation from EF-Tu" evidence="1">
    <location>
        <begin position="80"/>
        <end position="83"/>
    </location>
</feature>
<proteinExistence type="inferred from homology"/>
<organism>
    <name type="scientific">Burkholderia cenocepacia (strain HI2424)</name>
    <dbReference type="NCBI Taxonomy" id="331272"/>
    <lineage>
        <taxon>Bacteria</taxon>
        <taxon>Pseudomonadati</taxon>
        <taxon>Pseudomonadota</taxon>
        <taxon>Betaproteobacteria</taxon>
        <taxon>Burkholderiales</taxon>
        <taxon>Burkholderiaceae</taxon>
        <taxon>Burkholderia</taxon>
        <taxon>Burkholderia cepacia complex</taxon>
    </lineage>
</organism>
<accession>A0K8E2</accession>
<dbReference type="EMBL" id="CP000458">
    <property type="protein sequence ID" value="ABK08769.1"/>
    <property type="molecule type" value="Genomic_DNA"/>
</dbReference>
<dbReference type="RefSeq" id="WP_011549541.1">
    <property type="nucleotide sequence ID" value="NC_008542.1"/>
</dbReference>
<dbReference type="SMR" id="A0K8E2"/>
<dbReference type="GeneID" id="83048815"/>
<dbReference type="KEGG" id="bch:Bcen2424_2018"/>
<dbReference type="HOGENOM" id="CLU_047155_0_2_4"/>
<dbReference type="GO" id="GO:0005737">
    <property type="term" value="C:cytoplasm"/>
    <property type="evidence" value="ECO:0007669"/>
    <property type="project" value="UniProtKB-SubCell"/>
</dbReference>
<dbReference type="GO" id="GO:0003746">
    <property type="term" value="F:translation elongation factor activity"/>
    <property type="evidence" value="ECO:0007669"/>
    <property type="project" value="UniProtKB-UniRule"/>
</dbReference>
<dbReference type="CDD" id="cd14275">
    <property type="entry name" value="UBA_EF-Ts"/>
    <property type="match status" value="1"/>
</dbReference>
<dbReference type="FunFam" id="1.10.286.20:FF:000001">
    <property type="entry name" value="Elongation factor Ts"/>
    <property type="match status" value="1"/>
</dbReference>
<dbReference type="FunFam" id="1.10.8.10:FF:000001">
    <property type="entry name" value="Elongation factor Ts"/>
    <property type="match status" value="1"/>
</dbReference>
<dbReference type="Gene3D" id="1.10.286.20">
    <property type="match status" value="1"/>
</dbReference>
<dbReference type="Gene3D" id="1.10.8.10">
    <property type="entry name" value="DNA helicase RuvA subunit, C-terminal domain"/>
    <property type="match status" value="1"/>
</dbReference>
<dbReference type="Gene3D" id="3.30.479.20">
    <property type="entry name" value="Elongation factor Ts, dimerisation domain"/>
    <property type="match status" value="2"/>
</dbReference>
<dbReference type="HAMAP" id="MF_00050">
    <property type="entry name" value="EF_Ts"/>
    <property type="match status" value="1"/>
</dbReference>
<dbReference type="InterPro" id="IPR036402">
    <property type="entry name" value="EF-Ts_dimer_sf"/>
</dbReference>
<dbReference type="InterPro" id="IPR001816">
    <property type="entry name" value="Transl_elong_EFTs/EF1B"/>
</dbReference>
<dbReference type="InterPro" id="IPR014039">
    <property type="entry name" value="Transl_elong_EFTs/EF1B_dimer"/>
</dbReference>
<dbReference type="InterPro" id="IPR018101">
    <property type="entry name" value="Transl_elong_Ts_CS"/>
</dbReference>
<dbReference type="InterPro" id="IPR009060">
    <property type="entry name" value="UBA-like_sf"/>
</dbReference>
<dbReference type="NCBIfam" id="TIGR00116">
    <property type="entry name" value="tsf"/>
    <property type="match status" value="1"/>
</dbReference>
<dbReference type="PANTHER" id="PTHR11741">
    <property type="entry name" value="ELONGATION FACTOR TS"/>
    <property type="match status" value="1"/>
</dbReference>
<dbReference type="PANTHER" id="PTHR11741:SF0">
    <property type="entry name" value="ELONGATION FACTOR TS, MITOCHONDRIAL"/>
    <property type="match status" value="1"/>
</dbReference>
<dbReference type="Pfam" id="PF00889">
    <property type="entry name" value="EF_TS"/>
    <property type="match status" value="1"/>
</dbReference>
<dbReference type="SUPFAM" id="SSF54713">
    <property type="entry name" value="Elongation factor Ts (EF-Ts), dimerisation domain"/>
    <property type="match status" value="2"/>
</dbReference>
<dbReference type="SUPFAM" id="SSF46934">
    <property type="entry name" value="UBA-like"/>
    <property type="match status" value="1"/>
</dbReference>
<dbReference type="PROSITE" id="PS01127">
    <property type="entry name" value="EF_TS_2"/>
    <property type="match status" value="1"/>
</dbReference>
<gene>
    <name evidence="1" type="primary">tsf</name>
    <name type="ordered locus">Bcen2424_2018</name>
</gene>
<keyword id="KW-0963">Cytoplasm</keyword>
<keyword id="KW-0251">Elongation factor</keyword>
<keyword id="KW-0648">Protein biosynthesis</keyword>
<comment type="function">
    <text evidence="1">Associates with the EF-Tu.GDP complex and induces the exchange of GDP to GTP. It remains bound to the aminoacyl-tRNA.EF-Tu.GTP complex up to the GTP hydrolysis stage on the ribosome.</text>
</comment>
<comment type="subcellular location">
    <subcellularLocation>
        <location evidence="1">Cytoplasm</location>
    </subcellularLocation>
</comment>
<comment type="similarity">
    <text evidence="1">Belongs to the EF-Ts family.</text>
</comment>
<protein>
    <recommendedName>
        <fullName evidence="1">Elongation factor Ts</fullName>
        <shortName evidence="1">EF-Ts</shortName>
    </recommendedName>
</protein>
<name>EFTS_BURCH</name>
<sequence>MAAITASMVAELRAKTDAPMMECKKALTEADGDLAKAEELLRVKLGNKASKAASRVTAEGVVASFVGGNAGALVELNCETDFVAKNDDFLAFSKTVAELVATQNPADVAALSALPLEGSTVDAVRLALIGKIGENVSIRRFVRFETANKIATYLHGARIGVIVEYTGAEEQVGKDVAMHIAAMKPVALSSADVPAELIDTERRVAEQKAAESGKPAEIVAKMVDGSVQKYLKEVSLLNQTFVKNDKQTIEQMLKAANATVQKFALFVVGEGIEKRQDDFAAEVAAQVAAAKQQ</sequence>